<sequence>MRKIIHVDMDCFYAAIEMRDNPTLIGKPIAVGGEAKHRGVLATCNYEARKFGLHSAMSTAQAFKLCPNLILLPVNMPLYKQVSQQIHQIFRRYTDVIEPLSLDEAYLDVTDSTACSGSATWIATEIRQAIFNELGLTASAGIAPLKFLAKIASEQNKPNGQFVIKPEQIEHFIANLPLKKIPGVGKVTAQRLMAMGLNTCADIQHMNKARLLEQFGKLGQRIWAFSHGVDERHVEPHRILKSVGVERTLQHNIDELAQAYVILAELYALLIQRLKTHCPTLSFSMLHKVGVKLKFADFHVTTLEKRGMLITLNSFELLLTQIWQRAAGREIRLIGLHVNLPETTESKTQVQMSLW</sequence>
<feature type="chain" id="PRO_0000173931" description="DNA polymerase IV">
    <location>
        <begin position="1"/>
        <end position="355"/>
    </location>
</feature>
<feature type="domain" description="UmuC" evidence="1">
    <location>
        <begin position="4"/>
        <end position="185"/>
    </location>
</feature>
<feature type="active site" evidence="1">
    <location>
        <position position="104"/>
    </location>
</feature>
<feature type="binding site" evidence="1">
    <location>
        <position position="8"/>
    </location>
    <ligand>
        <name>Mg(2+)</name>
        <dbReference type="ChEBI" id="CHEBI:18420"/>
    </ligand>
</feature>
<feature type="binding site" evidence="1">
    <location>
        <position position="103"/>
    </location>
    <ligand>
        <name>Mg(2+)</name>
        <dbReference type="ChEBI" id="CHEBI:18420"/>
    </ligand>
</feature>
<feature type="site" description="Substrate discrimination" evidence="1">
    <location>
        <position position="13"/>
    </location>
</feature>
<keyword id="KW-0963">Cytoplasm</keyword>
<keyword id="KW-0227">DNA damage</keyword>
<keyword id="KW-0234">DNA repair</keyword>
<keyword id="KW-0235">DNA replication</keyword>
<keyword id="KW-0238">DNA-binding</keyword>
<keyword id="KW-0239">DNA-directed DNA polymerase</keyword>
<keyword id="KW-0460">Magnesium</keyword>
<keyword id="KW-0479">Metal-binding</keyword>
<keyword id="KW-0515">Mutator protein</keyword>
<keyword id="KW-0548">Nucleotidyltransferase</keyword>
<keyword id="KW-1185">Reference proteome</keyword>
<keyword id="KW-0808">Transferase</keyword>
<accession>Q9CNG4</accession>
<name>DPO4_PASMU</name>
<proteinExistence type="inferred from homology"/>
<comment type="function">
    <text evidence="1">Poorly processive, error-prone DNA polymerase involved in untargeted mutagenesis. Copies undamaged DNA at stalled replication forks, which arise in vivo from mismatched or misaligned primer ends. These misaligned primers can be extended by PolIV. Exhibits no 3'-5' exonuclease (proofreading) activity. May be involved in translesional synthesis, in conjunction with the beta clamp from PolIII.</text>
</comment>
<comment type="catalytic activity">
    <reaction evidence="1">
        <text>DNA(n) + a 2'-deoxyribonucleoside 5'-triphosphate = DNA(n+1) + diphosphate</text>
        <dbReference type="Rhea" id="RHEA:22508"/>
        <dbReference type="Rhea" id="RHEA-COMP:17339"/>
        <dbReference type="Rhea" id="RHEA-COMP:17340"/>
        <dbReference type="ChEBI" id="CHEBI:33019"/>
        <dbReference type="ChEBI" id="CHEBI:61560"/>
        <dbReference type="ChEBI" id="CHEBI:173112"/>
        <dbReference type="EC" id="2.7.7.7"/>
    </reaction>
</comment>
<comment type="cofactor">
    <cofactor evidence="1">
        <name>Mg(2+)</name>
        <dbReference type="ChEBI" id="CHEBI:18420"/>
    </cofactor>
    <text evidence="1">Binds 2 magnesium ions per subunit.</text>
</comment>
<comment type="subunit">
    <text evidence="1">Monomer.</text>
</comment>
<comment type="subcellular location">
    <subcellularLocation>
        <location evidence="1">Cytoplasm</location>
    </subcellularLocation>
</comment>
<comment type="similarity">
    <text evidence="1">Belongs to the DNA polymerase type-Y family.</text>
</comment>
<reference key="1">
    <citation type="journal article" date="2001" name="Proc. Natl. Acad. Sci. U.S.A.">
        <title>Complete genomic sequence of Pasteurella multocida Pm70.</title>
        <authorList>
            <person name="May B.J."/>
            <person name="Zhang Q."/>
            <person name="Li L.L."/>
            <person name="Paustian M.L."/>
            <person name="Whittam T.S."/>
            <person name="Kapur V."/>
        </authorList>
    </citation>
    <scope>NUCLEOTIDE SEQUENCE [LARGE SCALE GENOMIC DNA]</scope>
    <source>
        <strain>Pm70</strain>
    </source>
</reference>
<dbReference type="EC" id="2.7.7.7" evidence="1"/>
<dbReference type="EMBL" id="AE004439">
    <property type="protein sequence ID" value="AAK02551.1"/>
    <property type="molecule type" value="Genomic_DNA"/>
</dbReference>
<dbReference type="SMR" id="Q9CNG4"/>
<dbReference type="STRING" id="272843.PM0467"/>
<dbReference type="EnsemblBacteria" id="AAK02551">
    <property type="protein sequence ID" value="AAK02551"/>
    <property type="gene ID" value="PM0467"/>
</dbReference>
<dbReference type="KEGG" id="pmu:PM0467"/>
<dbReference type="HOGENOM" id="CLU_012348_1_2_6"/>
<dbReference type="Proteomes" id="UP000000809">
    <property type="component" value="Chromosome"/>
</dbReference>
<dbReference type="GO" id="GO:0005829">
    <property type="term" value="C:cytosol"/>
    <property type="evidence" value="ECO:0007669"/>
    <property type="project" value="TreeGrafter"/>
</dbReference>
<dbReference type="GO" id="GO:0003684">
    <property type="term" value="F:damaged DNA binding"/>
    <property type="evidence" value="ECO:0007669"/>
    <property type="project" value="InterPro"/>
</dbReference>
<dbReference type="GO" id="GO:0003887">
    <property type="term" value="F:DNA-directed DNA polymerase activity"/>
    <property type="evidence" value="ECO:0007669"/>
    <property type="project" value="UniProtKB-UniRule"/>
</dbReference>
<dbReference type="GO" id="GO:0000287">
    <property type="term" value="F:magnesium ion binding"/>
    <property type="evidence" value="ECO:0007669"/>
    <property type="project" value="UniProtKB-UniRule"/>
</dbReference>
<dbReference type="GO" id="GO:0006261">
    <property type="term" value="P:DNA-templated DNA replication"/>
    <property type="evidence" value="ECO:0007669"/>
    <property type="project" value="UniProtKB-UniRule"/>
</dbReference>
<dbReference type="GO" id="GO:0042276">
    <property type="term" value="P:error-prone translesion synthesis"/>
    <property type="evidence" value="ECO:0007669"/>
    <property type="project" value="TreeGrafter"/>
</dbReference>
<dbReference type="GO" id="GO:0009432">
    <property type="term" value="P:SOS response"/>
    <property type="evidence" value="ECO:0007669"/>
    <property type="project" value="TreeGrafter"/>
</dbReference>
<dbReference type="CDD" id="cd03586">
    <property type="entry name" value="PolY_Pol_IV_kappa"/>
    <property type="match status" value="1"/>
</dbReference>
<dbReference type="FunFam" id="1.10.150.20:FF:000019">
    <property type="entry name" value="DNA polymerase IV"/>
    <property type="match status" value="1"/>
</dbReference>
<dbReference type="FunFam" id="3.30.70.270:FF:000002">
    <property type="entry name" value="DNA polymerase IV"/>
    <property type="match status" value="1"/>
</dbReference>
<dbReference type="FunFam" id="3.40.1170.60:FF:000001">
    <property type="entry name" value="DNA polymerase IV"/>
    <property type="match status" value="1"/>
</dbReference>
<dbReference type="Gene3D" id="3.30.70.270">
    <property type="match status" value="1"/>
</dbReference>
<dbReference type="Gene3D" id="3.40.1170.60">
    <property type="match status" value="1"/>
</dbReference>
<dbReference type="Gene3D" id="1.10.150.20">
    <property type="entry name" value="5' to 3' exonuclease, C-terminal subdomain"/>
    <property type="match status" value="1"/>
</dbReference>
<dbReference type="Gene3D" id="3.30.1490.100">
    <property type="entry name" value="DNA polymerase, Y-family, little finger domain"/>
    <property type="match status" value="1"/>
</dbReference>
<dbReference type="HAMAP" id="MF_01113">
    <property type="entry name" value="DNApol_IV"/>
    <property type="match status" value="1"/>
</dbReference>
<dbReference type="InterPro" id="IPR043502">
    <property type="entry name" value="DNA/RNA_pol_sf"/>
</dbReference>
<dbReference type="InterPro" id="IPR036775">
    <property type="entry name" value="DNA_pol_Y-fam_lit_finger_sf"/>
</dbReference>
<dbReference type="InterPro" id="IPR017961">
    <property type="entry name" value="DNA_pol_Y-fam_little_finger"/>
</dbReference>
<dbReference type="InterPro" id="IPR050116">
    <property type="entry name" value="DNA_polymerase-Y"/>
</dbReference>
<dbReference type="InterPro" id="IPR022880">
    <property type="entry name" value="DNApol_IV"/>
</dbReference>
<dbReference type="InterPro" id="IPR053848">
    <property type="entry name" value="IMS_HHH_1"/>
</dbReference>
<dbReference type="InterPro" id="IPR043128">
    <property type="entry name" value="Rev_trsase/Diguanyl_cyclase"/>
</dbReference>
<dbReference type="InterPro" id="IPR001126">
    <property type="entry name" value="UmuC"/>
</dbReference>
<dbReference type="NCBIfam" id="NF002677">
    <property type="entry name" value="PRK02406.1"/>
    <property type="match status" value="1"/>
</dbReference>
<dbReference type="PANTHER" id="PTHR11076:SF33">
    <property type="entry name" value="DNA POLYMERASE KAPPA"/>
    <property type="match status" value="1"/>
</dbReference>
<dbReference type="PANTHER" id="PTHR11076">
    <property type="entry name" value="DNA REPAIR POLYMERASE UMUC / TRANSFERASE FAMILY MEMBER"/>
    <property type="match status" value="1"/>
</dbReference>
<dbReference type="Pfam" id="PF00817">
    <property type="entry name" value="IMS"/>
    <property type="match status" value="1"/>
</dbReference>
<dbReference type="Pfam" id="PF11799">
    <property type="entry name" value="IMS_C"/>
    <property type="match status" value="1"/>
</dbReference>
<dbReference type="Pfam" id="PF21999">
    <property type="entry name" value="IMS_HHH_1"/>
    <property type="match status" value="1"/>
</dbReference>
<dbReference type="SUPFAM" id="SSF56672">
    <property type="entry name" value="DNA/RNA polymerases"/>
    <property type="match status" value="1"/>
</dbReference>
<dbReference type="SUPFAM" id="SSF100879">
    <property type="entry name" value="Lesion bypass DNA polymerase (Y-family), little finger domain"/>
    <property type="match status" value="1"/>
</dbReference>
<dbReference type="PROSITE" id="PS50173">
    <property type="entry name" value="UMUC"/>
    <property type="match status" value="1"/>
</dbReference>
<evidence type="ECO:0000255" key="1">
    <source>
        <dbReference type="HAMAP-Rule" id="MF_01113"/>
    </source>
</evidence>
<organism>
    <name type="scientific">Pasteurella multocida (strain Pm70)</name>
    <dbReference type="NCBI Taxonomy" id="272843"/>
    <lineage>
        <taxon>Bacteria</taxon>
        <taxon>Pseudomonadati</taxon>
        <taxon>Pseudomonadota</taxon>
        <taxon>Gammaproteobacteria</taxon>
        <taxon>Pasteurellales</taxon>
        <taxon>Pasteurellaceae</taxon>
        <taxon>Pasteurella</taxon>
    </lineage>
</organism>
<gene>
    <name evidence="1" type="primary">dinB</name>
    <name type="ordered locus">PM0467</name>
</gene>
<protein>
    <recommendedName>
        <fullName evidence="1">DNA polymerase IV</fullName>
        <shortName evidence="1">Pol IV</shortName>
        <ecNumber evidence="1">2.7.7.7</ecNumber>
    </recommendedName>
</protein>